<name>PNX33_SCOMU</name>
<sequence>MKAFIAILSIAIVLLLIVSIKETSAKDCKQECVKRYTKGDLTNFLKAEYEPKNRGGICYCEFTCHVKFYIYLKHEMD</sequence>
<organism>
    <name type="scientific">Scolopendra mutilans</name>
    <name type="common">Chinese red-headed centipede</name>
    <name type="synonym">Scolopendra subspinipes mutilans</name>
    <dbReference type="NCBI Taxonomy" id="2836329"/>
    <lineage>
        <taxon>Eukaryota</taxon>
        <taxon>Metazoa</taxon>
        <taxon>Ecdysozoa</taxon>
        <taxon>Arthropoda</taxon>
        <taxon>Myriapoda</taxon>
        <taxon>Chilopoda</taxon>
        <taxon>Pleurostigmophora</taxon>
        <taxon>Scolopendromorpha</taxon>
        <taxon>Scolopendridae</taxon>
        <taxon>Scolopendra</taxon>
    </lineage>
</organism>
<protein>
    <recommendedName>
        <fullName evidence="3">Putative neurotoxin 1</fullName>
    </recommendedName>
    <alternativeName>
        <fullName evidence="6">Putative neurotoxin 3</fullName>
    </alternativeName>
</protein>
<dbReference type="EMBL" id="JQ757075">
    <property type="protein sequence ID" value="AFM55022.1"/>
    <property type="molecule type" value="mRNA"/>
</dbReference>
<dbReference type="SMR" id="I6S3A5"/>
<dbReference type="GO" id="GO:0005576">
    <property type="term" value="C:extracellular region"/>
    <property type="evidence" value="ECO:0007669"/>
    <property type="project" value="UniProtKB-SubCell"/>
</dbReference>
<dbReference type="GO" id="GO:0090729">
    <property type="term" value="F:toxin activity"/>
    <property type="evidence" value="ECO:0007669"/>
    <property type="project" value="UniProtKB-KW"/>
</dbReference>
<evidence type="ECO:0000255" key="1"/>
<evidence type="ECO:0000269" key="2">
    <source>
    </source>
</evidence>
<evidence type="ECO:0000303" key="3">
    <source>
    </source>
</evidence>
<evidence type="ECO:0000305" key="4"/>
<evidence type="ECO:0000305" key="5">
    <source>
    </source>
</evidence>
<evidence type="ECO:0000312" key="6">
    <source>
        <dbReference type="EMBL" id="AFM55022.1"/>
    </source>
</evidence>
<keyword id="KW-0903">Direct protein sequencing</keyword>
<keyword id="KW-1015">Disulfide bond</keyword>
<keyword id="KW-0528">Neurotoxin</keyword>
<keyword id="KW-0964">Secreted</keyword>
<keyword id="KW-0732">Signal</keyword>
<keyword id="KW-0800">Toxin</keyword>
<accession>I6S3A5</accession>
<reference key="1">
    <citation type="journal article" date="2012" name="Mol. Cell. Proteomics">
        <title>Chemical punch packed in venoms makes centipedes excellent predators.</title>
        <authorList>
            <person name="Yang S."/>
            <person name="Liu Z."/>
            <person name="Xiao Y."/>
            <person name="Li Y."/>
            <person name="Rong M."/>
            <person name="Liang S."/>
            <person name="Zhang Z."/>
            <person name="Yu H."/>
            <person name="King G.F."/>
            <person name="Lai R."/>
        </authorList>
    </citation>
    <scope>NUCLEOTIDE SEQUENCE [MRNA]</scope>
    <scope>PROTEIN SEQUENCE OF 47-65</scope>
    <scope>SUBCELLULAR LOCATION</scope>
    <source>
        <tissue>Venom</tissue>
        <tissue>Venom gland</tissue>
    </source>
</reference>
<feature type="signal peptide" evidence="1">
    <location>
        <begin position="1"/>
        <end position="25"/>
    </location>
</feature>
<feature type="propeptide" id="PRO_0000425486" evidence="5">
    <location>
        <begin position="26"/>
        <end position="46"/>
    </location>
</feature>
<feature type="chain" id="PRO_0000425487" description="Putative neurotoxin 1" evidence="5">
    <location>
        <begin position="47"/>
        <end position="77"/>
    </location>
</feature>
<feature type="sequence conflict" description="In Ref. 1; AFM55022." evidence="4" ref="1">
    <original>K</original>
    <variation>N</variation>
    <location>
        <position position="38"/>
    </location>
</feature>
<feature type="sequence conflict" description="In Ref. 1; AFM55022/AA sequence." evidence="4" ref="1">
    <original>EPKN</original>
    <variation>GPER</variation>
    <location>
        <begin position="50"/>
        <end position="53"/>
    </location>
</feature>
<feature type="sequence conflict" description="In Ref. 1; AFM55022/AA sequence." evidence="4" ref="1">
    <original>I</original>
    <variation>K</variation>
    <location>
        <position position="57"/>
    </location>
</feature>
<feature type="sequence conflict" description="In Ref. 1; AFM55022/AA sequence." evidence="4" ref="1">
    <original>H</original>
    <variation>R</variation>
    <location>
        <position position="65"/>
    </location>
</feature>
<feature type="sequence conflict" description="In Ref. 1; AFM55022." evidence="4" ref="1">
    <original>Y</original>
    <variation>H</variation>
    <location>
        <position position="71"/>
    </location>
</feature>
<feature type="sequence conflict" description="In Ref. 1; AFM55022." evidence="4" ref="1">
    <original>D</original>
    <variation>N</variation>
    <location>
        <position position="77"/>
    </location>
</feature>
<comment type="subcellular location">
    <subcellularLocation>
        <location evidence="2">Secreted</location>
    </subcellularLocation>
</comment>
<comment type="tissue specificity">
    <text evidence="5">Expressed by the venom gland.</text>
</comment>
<comment type="PTM">
    <text evidence="4">Contains 2 disulfide bonds.</text>
</comment>
<comment type="similarity">
    <text evidence="4">Belongs to the scolopendra neurotoxin 3 family.</text>
</comment>
<proteinExistence type="evidence at protein level"/>